<name>SYT_MAGMM</name>
<reference key="1">
    <citation type="journal article" date="2009" name="Appl. Environ. Microbiol.">
        <title>Complete genome sequence of the chemolithoautotrophic marine magnetotactic coccus strain MC-1.</title>
        <authorList>
            <person name="Schubbe S."/>
            <person name="Williams T.J."/>
            <person name="Xie G."/>
            <person name="Kiss H.E."/>
            <person name="Brettin T.S."/>
            <person name="Martinez D."/>
            <person name="Ross C.A."/>
            <person name="Schuler D."/>
            <person name="Cox B.L."/>
            <person name="Nealson K.H."/>
            <person name="Bazylinski D.A."/>
        </authorList>
    </citation>
    <scope>NUCLEOTIDE SEQUENCE [LARGE SCALE GENOMIC DNA]</scope>
    <source>
        <strain>ATCC BAA-1437 / JCM 17883 / MC-1</strain>
    </source>
</reference>
<sequence length="648" mass="73255">MVEIILPDGSSRSYDQETLTCGQIAASIGKGLAKAAIAGVVNGQKVDLDAPVPHGAQVAIITEDSPEGLEIIRHSASHLMAQAVKTLFPQAQVTIGPAIENGFYYDFDYERPFTPDDLTAIENCMRKLAKRNEKVERRVMPRDEAVAYFQAMGELYKAEIIGAIPAGEDVSLYSQGEFTDLCRGPHVPSTGKLKAFKVMKAGGAYWRGDSRNKMLQRIYGTAWATEADLKAYLTQMEEAEKRDHRRIGKDLDLFSVQEDAGGGLVFWHPRGSRIRRVIEDFWKDRHVEAGYEFLYTPHIANRQLWNTSGHTDFYSDSMFSPMEVDEQAYQIRPMNCPFHILIYKDRRHSYRELPFRWGELGTVYRYEMSGALHGLFRVRGFTQDDAHIFCTEQQIEEEIQRILDLTLDILRTYGFSDFEINLSTRPEKSVGSAAIWDKATEALRRAIVSRDLSYVVDEGGGAFYGPKIDVKITDSIGRKWQCSTVQLDFNLPERFDMGYIGEDGESHRPIMIHRALMGSLERFFGILVEHYAGWFPMWLAPVQAVVCSITDAQHAYAETVLAALKKAGLRVEIDLRNEKVGYKIREHTLKRVPYLLVVGDKEREEGTVNVRLRSGKSLGSLPIQDVVERLVEEAASRALSASEDQEEA</sequence>
<evidence type="ECO:0000255" key="1">
    <source>
        <dbReference type="HAMAP-Rule" id="MF_00184"/>
    </source>
</evidence>
<evidence type="ECO:0000255" key="2">
    <source>
        <dbReference type="PROSITE-ProRule" id="PRU01228"/>
    </source>
</evidence>
<keyword id="KW-0030">Aminoacyl-tRNA synthetase</keyword>
<keyword id="KW-0067">ATP-binding</keyword>
<keyword id="KW-0963">Cytoplasm</keyword>
<keyword id="KW-0436">Ligase</keyword>
<keyword id="KW-0479">Metal-binding</keyword>
<keyword id="KW-0547">Nucleotide-binding</keyword>
<keyword id="KW-0648">Protein biosynthesis</keyword>
<keyword id="KW-1185">Reference proteome</keyword>
<keyword id="KW-0694">RNA-binding</keyword>
<keyword id="KW-0820">tRNA-binding</keyword>
<keyword id="KW-0862">Zinc</keyword>
<dbReference type="EC" id="6.1.1.3" evidence="1"/>
<dbReference type="EMBL" id="CP000471">
    <property type="protein sequence ID" value="ABK42889.1"/>
    <property type="molecule type" value="Genomic_DNA"/>
</dbReference>
<dbReference type="RefSeq" id="WP_011712059.1">
    <property type="nucleotide sequence ID" value="NC_008576.1"/>
</dbReference>
<dbReference type="SMR" id="A0L4J6"/>
<dbReference type="STRING" id="156889.Mmc1_0363"/>
<dbReference type="KEGG" id="mgm:Mmc1_0363"/>
<dbReference type="eggNOG" id="COG0441">
    <property type="taxonomic scope" value="Bacteria"/>
</dbReference>
<dbReference type="HOGENOM" id="CLU_008554_0_1_5"/>
<dbReference type="OrthoDB" id="9802304at2"/>
<dbReference type="Proteomes" id="UP000002586">
    <property type="component" value="Chromosome"/>
</dbReference>
<dbReference type="GO" id="GO:0005737">
    <property type="term" value="C:cytoplasm"/>
    <property type="evidence" value="ECO:0007669"/>
    <property type="project" value="UniProtKB-SubCell"/>
</dbReference>
<dbReference type="GO" id="GO:0005524">
    <property type="term" value="F:ATP binding"/>
    <property type="evidence" value="ECO:0007669"/>
    <property type="project" value="UniProtKB-UniRule"/>
</dbReference>
<dbReference type="GO" id="GO:0046872">
    <property type="term" value="F:metal ion binding"/>
    <property type="evidence" value="ECO:0007669"/>
    <property type="project" value="UniProtKB-KW"/>
</dbReference>
<dbReference type="GO" id="GO:0004829">
    <property type="term" value="F:threonine-tRNA ligase activity"/>
    <property type="evidence" value="ECO:0007669"/>
    <property type="project" value="UniProtKB-UniRule"/>
</dbReference>
<dbReference type="GO" id="GO:0000049">
    <property type="term" value="F:tRNA binding"/>
    <property type="evidence" value="ECO:0007669"/>
    <property type="project" value="UniProtKB-KW"/>
</dbReference>
<dbReference type="GO" id="GO:0006435">
    <property type="term" value="P:threonyl-tRNA aminoacylation"/>
    <property type="evidence" value="ECO:0007669"/>
    <property type="project" value="UniProtKB-UniRule"/>
</dbReference>
<dbReference type="CDD" id="cd01667">
    <property type="entry name" value="TGS_ThrRS"/>
    <property type="match status" value="1"/>
</dbReference>
<dbReference type="CDD" id="cd00860">
    <property type="entry name" value="ThrRS_anticodon"/>
    <property type="match status" value="1"/>
</dbReference>
<dbReference type="CDD" id="cd00771">
    <property type="entry name" value="ThrRS_core"/>
    <property type="match status" value="1"/>
</dbReference>
<dbReference type="FunFam" id="3.30.54.20:FF:000002">
    <property type="entry name" value="Threonine--tRNA ligase"/>
    <property type="match status" value="1"/>
</dbReference>
<dbReference type="FunFam" id="3.30.930.10:FF:000002">
    <property type="entry name" value="Threonine--tRNA ligase"/>
    <property type="match status" value="1"/>
</dbReference>
<dbReference type="FunFam" id="3.40.50.800:FF:000001">
    <property type="entry name" value="Threonine--tRNA ligase"/>
    <property type="match status" value="1"/>
</dbReference>
<dbReference type="FunFam" id="3.30.980.10:FF:000005">
    <property type="entry name" value="Threonyl-tRNA synthetase, mitochondrial"/>
    <property type="match status" value="1"/>
</dbReference>
<dbReference type="Gene3D" id="3.10.20.30">
    <property type="match status" value="1"/>
</dbReference>
<dbReference type="Gene3D" id="3.30.54.20">
    <property type="match status" value="1"/>
</dbReference>
<dbReference type="Gene3D" id="3.40.50.800">
    <property type="entry name" value="Anticodon-binding domain"/>
    <property type="match status" value="1"/>
</dbReference>
<dbReference type="Gene3D" id="3.30.930.10">
    <property type="entry name" value="Bira Bifunctional Protein, Domain 2"/>
    <property type="match status" value="1"/>
</dbReference>
<dbReference type="Gene3D" id="3.30.980.10">
    <property type="entry name" value="Threonyl-trna Synthetase, Chain A, domain 2"/>
    <property type="match status" value="1"/>
</dbReference>
<dbReference type="HAMAP" id="MF_00184">
    <property type="entry name" value="Thr_tRNA_synth"/>
    <property type="match status" value="1"/>
</dbReference>
<dbReference type="InterPro" id="IPR002314">
    <property type="entry name" value="aa-tRNA-synt_IIb"/>
</dbReference>
<dbReference type="InterPro" id="IPR006195">
    <property type="entry name" value="aa-tRNA-synth_II"/>
</dbReference>
<dbReference type="InterPro" id="IPR045864">
    <property type="entry name" value="aa-tRNA-synth_II/BPL/LPL"/>
</dbReference>
<dbReference type="InterPro" id="IPR004154">
    <property type="entry name" value="Anticodon-bd"/>
</dbReference>
<dbReference type="InterPro" id="IPR036621">
    <property type="entry name" value="Anticodon-bd_dom_sf"/>
</dbReference>
<dbReference type="InterPro" id="IPR012675">
    <property type="entry name" value="Beta-grasp_dom_sf"/>
</dbReference>
<dbReference type="InterPro" id="IPR004095">
    <property type="entry name" value="TGS"/>
</dbReference>
<dbReference type="InterPro" id="IPR012676">
    <property type="entry name" value="TGS-like"/>
</dbReference>
<dbReference type="InterPro" id="IPR002320">
    <property type="entry name" value="Thr-tRNA-ligase_IIa"/>
</dbReference>
<dbReference type="InterPro" id="IPR018163">
    <property type="entry name" value="Thr/Ala-tRNA-synth_IIc_edit"/>
</dbReference>
<dbReference type="InterPro" id="IPR047246">
    <property type="entry name" value="ThrRS_anticodon"/>
</dbReference>
<dbReference type="InterPro" id="IPR033728">
    <property type="entry name" value="ThrRS_core"/>
</dbReference>
<dbReference type="InterPro" id="IPR012947">
    <property type="entry name" value="tRNA_SAD"/>
</dbReference>
<dbReference type="NCBIfam" id="TIGR00418">
    <property type="entry name" value="thrS"/>
    <property type="match status" value="1"/>
</dbReference>
<dbReference type="PANTHER" id="PTHR11451:SF44">
    <property type="entry name" value="THREONINE--TRNA LIGASE, CHLOROPLASTIC_MITOCHONDRIAL 2"/>
    <property type="match status" value="1"/>
</dbReference>
<dbReference type="PANTHER" id="PTHR11451">
    <property type="entry name" value="THREONINE-TRNA LIGASE"/>
    <property type="match status" value="1"/>
</dbReference>
<dbReference type="Pfam" id="PF03129">
    <property type="entry name" value="HGTP_anticodon"/>
    <property type="match status" value="1"/>
</dbReference>
<dbReference type="Pfam" id="PF02824">
    <property type="entry name" value="TGS"/>
    <property type="match status" value="1"/>
</dbReference>
<dbReference type="Pfam" id="PF00587">
    <property type="entry name" value="tRNA-synt_2b"/>
    <property type="match status" value="1"/>
</dbReference>
<dbReference type="Pfam" id="PF07973">
    <property type="entry name" value="tRNA_SAD"/>
    <property type="match status" value="1"/>
</dbReference>
<dbReference type="PRINTS" id="PR01047">
    <property type="entry name" value="TRNASYNTHTHR"/>
</dbReference>
<dbReference type="SMART" id="SM00863">
    <property type="entry name" value="tRNA_SAD"/>
    <property type="match status" value="1"/>
</dbReference>
<dbReference type="SUPFAM" id="SSF52954">
    <property type="entry name" value="Class II aaRS ABD-related"/>
    <property type="match status" value="1"/>
</dbReference>
<dbReference type="SUPFAM" id="SSF55681">
    <property type="entry name" value="Class II aaRS and biotin synthetases"/>
    <property type="match status" value="1"/>
</dbReference>
<dbReference type="SUPFAM" id="SSF81271">
    <property type="entry name" value="TGS-like"/>
    <property type="match status" value="1"/>
</dbReference>
<dbReference type="SUPFAM" id="SSF55186">
    <property type="entry name" value="ThrRS/AlaRS common domain"/>
    <property type="match status" value="1"/>
</dbReference>
<dbReference type="PROSITE" id="PS50862">
    <property type="entry name" value="AA_TRNA_LIGASE_II"/>
    <property type="match status" value="1"/>
</dbReference>
<dbReference type="PROSITE" id="PS51880">
    <property type="entry name" value="TGS"/>
    <property type="match status" value="1"/>
</dbReference>
<feature type="chain" id="PRO_1000203911" description="Threonine--tRNA ligase">
    <location>
        <begin position="1"/>
        <end position="648"/>
    </location>
</feature>
<feature type="domain" description="TGS" evidence="2">
    <location>
        <begin position="1"/>
        <end position="62"/>
    </location>
</feature>
<feature type="region of interest" description="Catalytic" evidence="1">
    <location>
        <begin position="243"/>
        <end position="536"/>
    </location>
</feature>
<feature type="binding site" evidence="1">
    <location>
        <position position="336"/>
    </location>
    <ligand>
        <name>Zn(2+)</name>
        <dbReference type="ChEBI" id="CHEBI:29105"/>
    </ligand>
</feature>
<feature type="binding site" evidence="1">
    <location>
        <position position="387"/>
    </location>
    <ligand>
        <name>Zn(2+)</name>
        <dbReference type="ChEBI" id="CHEBI:29105"/>
    </ligand>
</feature>
<feature type="binding site" evidence="1">
    <location>
        <position position="513"/>
    </location>
    <ligand>
        <name>Zn(2+)</name>
        <dbReference type="ChEBI" id="CHEBI:29105"/>
    </ligand>
</feature>
<protein>
    <recommendedName>
        <fullName evidence="1">Threonine--tRNA ligase</fullName>
        <ecNumber evidence="1">6.1.1.3</ecNumber>
    </recommendedName>
    <alternativeName>
        <fullName evidence="1">Threonyl-tRNA synthetase</fullName>
        <shortName evidence="1">ThrRS</shortName>
    </alternativeName>
</protein>
<gene>
    <name evidence="1" type="primary">thrS</name>
    <name type="ordered locus">Mmc1_0363</name>
</gene>
<comment type="function">
    <text evidence="1">Catalyzes the attachment of threonine to tRNA(Thr) in a two-step reaction: L-threonine is first activated by ATP to form Thr-AMP and then transferred to the acceptor end of tRNA(Thr). Also edits incorrectly charged L-seryl-tRNA(Thr).</text>
</comment>
<comment type="catalytic activity">
    <reaction evidence="1">
        <text>tRNA(Thr) + L-threonine + ATP = L-threonyl-tRNA(Thr) + AMP + diphosphate + H(+)</text>
        <dbReference type="Rhea" id="RHEA:24624"/>
        <dbReference type="Rhea" id="RHEA-COMP:9670"/>
        <dbReference type="Rhea" id="RHEA-COMP:9704"/>
        <dbReference type="ChEBI" id="CHEBI:15378"/>
        <dbReference type="ChEBI" id="CHEBI:30616"/>
        <dbReference type="ChEBI" id="CHEBI:33019"/>
        <dbReference type="ChEBI" id="CHEBI:57926"/>
        <dbReference type="ChEBI" id="CHEBI:78442"/>
        <dbReference type="ChEBI" id="CHEBI:78534"/>
        <dbReference type="ChEBI" id="CHEBI:456215"/>
        <dbReference type="EC" id="6.1.1.3"/>
    </reaction>
</comment>
<comment type="cofactor">
    <cofactor evidence="1">
        <name>Zn(2+)</name>
        <dbReference type="ChEBI" id="CHEBI:29105"/>
    </cofactor>
    <text evidence="1">Binds 1 zinc ion per subunit.</text>
</comment>
<comment type="subunit">
    <text evidence="1">Homodimer.</text>
</comment>
<comment type="subcellular location">
    <subcellularLocation>
        <location evidence="1">Cytoplasm</location>
    </subcellularLocation>
</comment>
<comment type="similarity">
    <text evidence="1">Belongs to the class-II aminoacyl-tRNA synthetase family.</text>
</comment>
<accession>A0L4J6</accession>
<proteinExistence type="inferred from homology"/>
<organism>
    <name type="scientific">Magnetococcus marinus (strain ATCC BAA-1437 / JCM 17883 / MC-1)</name>
    <dbReference type="NCBI Taxonomy" id="156889"/>
    <lineage>
        <taxon>Bacteria</taxon>
        <taxon>Pseudomonadati</taxon>
        <taxon>Pseudomonadota</taxon>
        <taxon>Alphaproteobacteria</taxon>
        <taxon>Magnetococcales</taxon>
        <taxon>Magnetococcaceae</taxon>
        <taxon>Magnetococcus</taxon>
    </lineage>
</organism>